<accession>P18269</accession>
<gene>
    <name type="primary">SA85-1.1</name>
</gene>
<reference key="1">
    <citation type="journal article" date="1991" name="Proc. Natl. Acad. Sci. U.S.A.">
        <title>The major 85-kDa surface antigen of the mammalian-stage forms of Trypanosoma cruzi is a family of sialidases.</title>
        <authorList>
            <person name="Kahn S."/>
            <person name="Colbert T.G."/>
            <person name="Wallace J.C."/>
            <person name="Hoagland N.A."/>
            <person name="Eisen H."/>
        </authorList>
    </citation>
    <scope>NUCLEOTIDE SEQUENCE [MRNA]</scope>
    <source>
        <strain>CL</strain>
    </source>
</reference>
<reference key="2">
    <citation type="journal article" date="1990" name="J. Exp. Med.">
        <title>The major 85-kD surface antigen of the mammalian form of Trypanosoma cruzi is encoded by a large heterogeneous family of simultaneously expressed genes.</title>
        <authorList>
            <person name="Kahn S."/>
            <person name="van Voorhis W."/>
            <person name="Eisen H."/>
        </authorList>
    </citation>
    <scope>NUCLEOTIDE SEQUENCE [MRNA] OF 520-752</scope>
    <source>
        <strain>CL</strain>
    </source>
</reference>
<proteinExistence type="evidence at transcript level"/>
<keyword id="KW-0326">Glycosidase</keyword>
<keyword id="KW-0378">Hydrolase</keyword>
<keyword id="KW-0677">Repeat</keyword>
<keyword id="KW-0732">Signal</keyword>
<name>8511_TRYCR</name>
<comment type="function">
    <text>Developmentally regulated neuraminidase implicated in parasite invasion of cells. May contribute to the pathology during T.cruzi infection by cleaving sialic acid from cells of the immune system.</text>
</comment>
<comment type="catalytic activity">
    <reaction>
        <text>Hydrolysis of alpha-(2-&gt;3)-, alpha-(2-&gt;6)-, alpha-(2-&gt;8)- glycosidic linkages of terminal sialic acid residues in oligosaccharides, glycoproteins, glycolipids, colominic acid and synthetic substrates.</text>
        <dbReference type="EC" id="3.2.1.18"/>
    </reaction>
</comment>
<comment type="developmental stage">
    <text>Mammalian stage of parasite.</text>
</comment>
<comment type="miscellaneous">
    <text>The parasite mammalian stage surface antigen exhibits extensive antigenic diversity.</text>
</comment>
<comment type="similarity">
    <text evidence="3">Belongs to the glycosyl hydrolase 33 family.</text>
</comment>
<sequence length="752" mass="80847">MSRRVFASAVLLLIVVTMCCGGAATAQVGSNADASTPGSALTGAIAGEGSSSGGVEGLQRVDLFVPQKTQVLPKKGPDSSRRDSFFSPSLVSAGGVIAAFAEGHINTKNPHNESAKPFSDVVAGYIDSAWEWPTLVEKVSESTWQAHTVLGKAEGKKSLDVVLRPTTTTKGNKVFLLAGSTDLSYVNWSWREGSLELKLVVGDVTKPTSSEPTERIKWGEIKSLLNESTIAAQKGKLTEFLASGGSGVVMEDGTIVFSLMAVNEKKDGVFSLIIYSKDNGSTWSLSEGISPAKCGAPRITEWEGSLLMIVDCENDQRVYVSRDMGTTWTEAIGTLSGVGSTHNWETIGRRLAVEALITVTIEGRKVMLYTQRGYALGETETTSPLYLWVTDNNRSFFVGPVGMDNAVKGELAGALLYSDGGLHLLQRRDSGEDSVMSLSRLTEELKEIKSVLSTWSQKDVFFSSLSIPTVGLVAVLSDAAGDGRWYDEYLCLNATVTNATKVKDGFQLTEPDSRAVWSVNIPDGNVRHISLSHNFTLVASVIIEEAPSGNTPLLTAVLVDAGPEYFMRLSYTADNKWMTMLKDEKKPTTESRPWEAGKEHQVALMLQGNKASVYVDGELLGEEEVPLTGEKPLEIFAFCFGACKIDGDEEESSPKEIGKKPRVTVTNVFLYNRPLNSTEMRAIKDRIPVPTRAPEPQVKIAPKPAAPAAPAGNEETARETGDGGANGDAVSAYGRVLLPLLFLLGLWGLATA</sequence>
<feature type="signal peptide" evidence="1">
    <location>
        <begin position="1"/>
        <end position="23"/>
    </location>
</feature>
<feature type="chain" id="PRO_0000012039" description="Sialidase 85-1.1">
    <location>
        <begin position="24"/>
        <end position="752"/>
    </location>
</feature>
<feature type="repeat" description="BNR 1">
    <location>
        <begin position="274"/>
        <end position="285"/>
    </location>
</feature>
<feature type="repeat" description="BNR 2">
    <location>
        <begin position="319"/>
        <end position="330"/>
    </location>
</feature>
<feature type="region of interest" description="Disordered" evidence="2">
    <location>
        <begin position="693"/>
        <end position="725"/>
    </location>
</feature>
<feature type="compositionally biased region" description="Low complexity" evidence="2">
    <location>
        <begin position="701"/>
        <end position="711"/>
    </location>
</feature>
<organism>
    <name type="scientific">Trypanosoma cruzi</name>
    <dbReference type="NCBI Taxonomy" id="5693"/>
    <lineage>
        <taxon>Eukaryota</taxon>
        <taxon>Discoba</taxon>
        <taxon>Euglenozoa</taxon>
        <taxon>Kinetoplastea</taxon>
        <taxon>Metakinetoplastina</taxon>
        <taxon>Trypanosomatida</taxon>
        <taxon>Trypanosomatidae</taxon>
        <taxon>Trypanosoma</taxon>
        <taxon>Schizotrypanum</taxon>
    </lineage>
</organism>
<dbReference type="EC" id="3.2.1.18"/>
<dbReference type="EMBL" id="M62735">
    <property type="protein sequence ID" value="AAA30245.1"/>
    <property type="molecule type" value="mRNA"/>
</dbReference>
<dbReference type="EMBL" id="X53545">
    <property type="protein sequence ID" value="CAA37617.1"/>
    <property type="molecule type" value="mRNA"/>
</dbReference>
<dbReference type="PIR" id="A39378">
    <property type="entry name" value="A39378"/>
</dbReference>
<dbReference type="PIR" id="S11292">
    <property type="entry name" value="S11292"/>
</dbReference>
<dbReference type="SMR" id="P18269"/>
<dbReference type="CAZy" id="GH33">
    <property type="family name" value="Glycoside Hydrolase Family 33"/>
</dbReference>
<dbReference type="VEuPathDB" id="TriTrypDB:BCY84_06519"/>
<dbReference type="VEuPathDB" id="TriTrypDB:C3747_244g28"/>
<dbReference type="VEuPathDB" id="TriTrypDB:C4B63_62g100"/>
<dbReference type="VEuPathDB" id="TriTrypDB:ECC02_006797"/>
<dbReference type="VEuPathDB" id="TriTrypDB:Tc_MARK_4947"/>
<dbReference type="VEuPathDB" id="TriTrypDB:TcBrA4_0141070"/>
<dbReference type="VEuPathDB" id="TriTrypDB:TcCL_ESM07364"/>
<dbReference type="VEuPathDB" id="TriTrypDB:TcCLB.508061.20"/>
<dbReference type="VEuPathDB" id="TriTrypDB:TcCLB.508285.60"/>
<dbReference type="VEuPathDB" id="TriTrypDB:TcCLB.509411.10"/>
<dbReference type="VEuPathDB" id="TriTrypDB:TCDM_12170"/>
<dbReference type="VEuPathDB" id="TriTrypDB:TcG_10912"/>
<dbReference type="VEuPathDB" id="TriTrypDB:TCSYLVIO_007680"/>
<dbReference type="VEuPathDB" id="TriTrypDB:TcYC6_0130090"/>
<dbReference type="GO" id="GO:0005737">
    <property type="term" value="C:cytoplasm"/>
    <property type="evidence" value="ECO:0007669"/>
    <property type="project" value="TreeGrafter"/>
</dbReference>
<dbReference type="GO" id="GO:0043231">
    <property type="term" value="C:intracellular membrane-bounded organelle"/>
    <property type="evidence" value="ECO:0007669"/>
    <property type="project" value="TreeGrafter"/>
</dbReference>
<dbReference type="GO" id="GO:0016020">
    <property type="term" value="C:membrane"/>
    <property type="evidence" value="ECO:0007669"/>
    <property type="project" value="TreeGrafter"/>
</dbReference>
<dbReference type="GO" id="GO:0004308">
    <property type="term" value="F:exo-alpha-sialidase activity"/>
    <property type="evidence" value="ECO:0007669"/>
    <property type="project" value="UniProtKB-EC"/>
</dbReference>
<dbReference type="GO" id="GO:0006689">
    <property type="term" value="P:ganglioside catabolic process"/>
    <property type="evidence" value="ECO:0007669"/>
    <property type="project" value="TreeGrafter"/>
</dbReference>
<dbReference type="GO" id="GO:0009313">
    <property type="term" value="P:oligosaccharide catabolic process"/>
    <property type="evidence" value="ECO:0007669"/>
    <property type="project" value="TreeGrafter"/>
</dbReference>
<dbReference type="CDD" id="cd15482">
    <property type="entry name" value="Sialidase_non-viral"/>
    <property type="match status" value="1"/>
</dbReference>
<dbReference type="Gene3D" id="2.120.10.10">
    <property type="match status" value="1"/>
</dbReference>
<dbReference type="Gene3D" id="2.60.120.200">
    <property type="match status" value="1"/>
</dbReference>
<dbReference type="InterPro" id="IPR013320">
    <property type="entry name" value="ConA-like_dom_sf"/>
</dbReference>
<dbReference type="InterPro" id="IPR011040">
    <property type="entry name" value="Sialidase"/>
</dbReference>
<dbReference type="InterPro" id="IPR026856">
    <property type="entry name" value="Sialidase_fam"/>
</dbReference>
<dbReference type="InterPro" id="IPR036278">
    <property type="entry name" value="Sialidase_sf"/>
</dbReference>
<dbReference type="InterPro" id="IPR008377">
    <property type="entry name" value="Sialidase_trypan"/>
</dbReference>
<dbReference type="InterPro" id="IPR021287">
    <property type="entry name" value="Trans-sialidase_CS"/>
</dbReference>
<dbReference type="InterPro" id="IPR055239">
    <property type="entry name" value="TS_C"/>
</dbReference>
<dbReference type="PANTHER" id="PTHR10628:SF30">
    <property type="entry name" value="EXO-ALPHA-SIALIDASE"/>
    <property type="match status" value="1"/>
</dbReference>
<dbReference type="PANTHER" id="PTHR10628">
    <property type="entry name" value="SIALIDASE"/>
    <property type="match status" value="1"/>
</dbReference>
<dbReference type="Pfam" id="PF13859">
    <property type="entry name" value="BNR_3"/>
    <property type="match status" value="1"/>
</dbReference>
<dbReference type="Pfam" id="PF11052">
    <property type="entry name" value="Tr-sialidase_C"/>
    <property type="match status" value="1"/>
</dbReference>
<dbReference type="Pfam" id="PF22925">
    <property type="entry name" value="TS_C"/>
    <property type="match status" value="1"/>
</dbReference>
<dbReference type="PRINTS" id="PR01803">
    <property type="entry name" value="TCSIALIDASE"/>
</dbReference>
<dbReference type="SUPFAM" id="SSF49899">
    <property type="entry name" value="Concanavalin A-like lectins/glucanases"/>
    <property type="match status" value="1"/>
</dbReference>
<dbReference type="SUPFAM" id="SSF50939">
    <property type="entry name" value="Sialidases"/>
    <property type="match status" value="1"/>
</dbReference>
<protein>
    <recommendedName>
        <fullName>Sialidase 85-1.1</fullName>
        <ecNumber>3.2.1.18</ecNumber>
    </recommendedName>
    <alternativeName>
        <fullName>Major 85 kDa surface antigen</fullName>
    </alternativeName>
    <alternativeName>
        <fullName>Neuraminidase</fullName>
        <shortName>NA</shortName>
    </alternativeName>
    <alternativeName>
        <fullName>SA85-1.1 protein</fullName>
    </alternativeName>
</protein>
<evidence type="ECO:0000255" key="1"/>
<evidence type="ECO:0000256" key="2">
    <source>
        <dbReference type="SAM" id="MobiDB-lite"/>
    </source>
</evidence>
<evidence type="ECO:0000305" key="3"/>